<accession>C4ZEG7</accession>
<name>MURB_AGARV</name>
<organism>
    <name type="scientific">Agathobacter rectalis (strain ATCC 33656 / DSM 3377 / JCM 17463 / KCTC 5835 / VPI 0990)</name>
    <name type="common">Eubacterium rectale</name>
    <dbReference type="NCBI Taxonomy" id="515619"/>
    <lineage>
        <taxon>Bacteria</taxon>
        <taxon>Bacillati</taxon>
        <taxon>Bacillota</taxon>
        <taxon>Clostridia</taxon>
        <taxon>Lachnospirales</taxon>
        <taxon>Lachnospiraceae</taxon>
        <taxon>Agathobacter</taxon>
    </lineage>
</organism>
<proteinExistence type="inferred from homology"/>
<gene>
    <name evidence="1" type="primary">murB</name>
    <name type="ordered locus">EUBREC_0696</name>
</gene>
<sequence>MNQTFVKSVTEQLPQLGLLQDEPMKKHTTFRIGGPADYYAEPDMSRISKLIEMAKACDMPVTVIGNGSNLLVGDKGIRGLVIGIGKGLSEIEVTEAVAQDFTAQDNCHIITAGAGAILAAVAAKAAEASLSGLEFASGIPGSVGGAVVMNAGAYGGEIKDVLIDATVLTADGELKTVTRDELDLSYRHSIVPEKGYIVLSARFRLTPKPKDEIKSYMAELRAKRVEKQPLEYPSAGSTFKRPEGYFAGKLIMDAGLRGYSVGDAQVSEKHCGFVVNKGEAAAADVLTLIKDVQETVLKQFGVKLEPEVKMIGEF</sequence>
<dbReference type="EC" id="1.3.1.98" evidence="1"/>
<dbReference type="EMBL" id="CP001107">
    <property type="protein sequence ID" value="ACR74483.1"/>
    <property type="molecule type" value="Genomic_DNA"/>
</dbReference>
<dbReference type="RefSeq" id="WP_012741599.1">
    <property type="nucleotide sequence ID" value="NC_012781.1"/>
</dbReference>
<dbReference type="SMR" id="C4ZEG7"/>
<dbReference type="STRING" id="515619.EUBREC_0696"/>
<dbReference type="PaxDb" id="515619-EUBREC_0696"/>
<dbReference type="GeneID" id="86987579"/>
<dbReference type="KEGG" id="ere:EUBREC_0696"/>
<dbReference type="HOGENOM" id="CLU_035304_1_1_9"/>
<dbReference type="UniPathway" id="UPA00219"/>
<dbReference type="Proteomes" id="UP000001477">
    <property type="component" value="Chromosome"/>
</dbReference>
<dbReference type="GO" id="GO:0005829">
    <property type="term" value="C:cytosol"/>
    <property type="evidence" value="ECO:0007669"/>
    <property type="project" value="TreeGrafter"/>
</dbReference>
<dbReference type="GO" id="GO:0071949">
    <property type="term" value="F:FAD binding"/>
    <property type="evidence" value="ECO:0007669"/>
    <property type="project" value="InterPro"/>
</dbReference>
<dbReference type="GO" id="GO:0008762">
    <property type="term" value="F:UDP-N-acetylmuramate dehydrogenase activity"/>
    <property type="evidence" value="ECO:0007669"/>
    <property type="project" value="UniProtKB-UniRule"/>
</dbReference>
<dbReference type="GO" id="GO:0051301">
    <property type="term" value="P:cell division"/>
    <property type="evidence" value="ECO:0007669"/>
    <property type="project" value="UniProtKB-KW"/>
</dbReference>
<dbReference type="GO" id="GO:0071555">
    <property type="term" value="P:cell wall organization"/>
    <property type="evidence" value="ECO:0007669"/>
    <property type="project" value="UniProtKB-KW"/>
</dbReference>
<dbReference type="GO" id="GO:0009252">
    <property type="term" value="P:peptidoglycan biosynthetic process"/>
    <property type="evidence" value="ECO:0007669"/>
    <property type="project" value="UniProtKB-UniRule"/>
</dbReference>
<dbReference type="GO" id="GO:0008360">
    <property type="term" value="P:regulation of cell shape"/>
    <property type="evidence" value="ECO:0007669"/>
    <property type="project" value="UniProtKB-KW"/>
</dbReference>
<dbReference type="Gene3D" id="3.30.465.10">
    <property type="match status" value="1"/>
</dbReference>
<dbReference type="Gene3D" id="3.90.78.10">
    <property type="entry name" value="UDP-N-acetylenolpyruvoylglucosamine reductase, C-terminal domain"/>
    <property type="match status" value="1"/>
</dbReference>
<dbReference type="Gene3D" id="3.30.43.10">
    <property type="entry name" value="Uridine Diphospho-n-acetylenolpyruvylglucosamine Reductase, domain 2"/>
    <property type="match status" value="1"/>
</dbReference>
<dbReference type="HAMAP" id="MF_00037">
    <property type="entry name" value="MurB"/>
    <property type="match status" value="1"/>
</dbReference>
<dbReference type="InterPro" id="IPR016166">
    <property type="entry name" value="FAD-bd_PCMH"/>
</dbReference>
<dbReference type="InterPro" id="IPR036318">
    <property type="entry name" value="FAD-bd_PCMH-like_sf"/>
</dbReference>
<dbReference type="InterPro" id="IPR016167">
    <property type="entry name" value="FAD-bd_PCMH_sub1"/>
</dbReference>
<dbReference type="InterPro" id="IPR016169">
    <property type="entry name" value="FAD-bd_PCMH_sub2"/>
</dbReference>
<dbReference type="InterPro" id="IPR003170">
    <property type="entry name" value="MurB"/>
</dbReference>
<dbReference type="InterPro" id="IPR011601">
    <property type="entry name" value="MurB_C"/>
</dbReference>
<dbReference type="InterPro" id="IPR036635">
    <property type="entry name" value="MurB_C_sf"/>
</dbReference>
<dbReference type="InterPro" id="IPR006094">
    <property type="entry name" value="Oxid_FAD_bind_N"/>
</dbReference>
<dbReference type="NCBIfam" id="TIGR00179">
    <property type="entry name" value="murB"/>
    <property type="match status" value="1"/>
</dbReference>
<dbReference type="NCBIfam" id="NF010480">
    <property type="entry name" value="PRK13905.1"/>
    <property type="match status" value="1"/>
</dbReference>
<dbReference type="PANTHER" id="PTHR21071">
    <property type="entry name" value="UDP-N-ACETYLENOLPYRUVOYLGLUCOSAMINE REDUCTASE"/>
    <property type="match status" value="1"/>
</dbReference>
<dbReference type="PANTHER" id="PTHR21071:SF4">
    <property type="entry name" value="UDP-N-ACETYLENOLPYRUVOYLGLUCOSAMINE REDUCTASE"/>
    <property type="match status" value="1"/>
</dbReference>
<dbReference type="Pfam" id="PF01565">
    <property type="entry name" value="FAD_binding_4"/>
    <property type="match status" value="1"/>
</dbReference>
<dbReference type="Pfam" id="PF02873">
    <property type="entry name" value="MurB_C"/>
    <property type="match status" value="1"/>
</dbReference>
<dbReference type="SUPFAM" id="SSF56176">
    <property type="entry name" value="FAD-binding/transporter-associated domain-like"/>
    <property type="match status" value="1"/>
</dbReference>
<dbReference type="SUPFAM" id="SSF56194">
    <property type="entry name" value="Uridine diphospho-N-Acetylenolpyruvylglucosamine reductase, MurB, C-terminal domain"/>
    <property type="match status" value="1"/>
</dbReference>
<dbReference type="PROSITE" id="PS51387">
    <property type="entry name" value="FAD_PCMH"/>
    <property type="match status" value="1"/>
</dbReference>
<comment type="function">
    <text evidence="1">Cell wall formation.</text>
</comment>
<comment type="catalytic activity">
    <reaction evidence="1">
        <text>UDP-N-acetyl-alpha-D-muramate + NADP(+) = UDP-N-acetyl-3-O-(1-carboxyvinyl)-alpha-D-glucosamine + NADPH + H(+)</text>
        <dbReference type="Rhea" id="RHEA:12248"/>
        <dbReference type="ChEBI" id="CHEBI:15378"/>
        <dbReference type="ChEBI" id="CHEBI:57783"/>
        <dbReference type="ChEBI" id="CHEBI:58349"/>
        <dbReference type="ChEBI" id="CHEBI:68483"/>
        <dbReference type="ChEBI" id="CHEBI:70757"/>
        <dbReference type="EC" id="1.3.1.98"/>
    </reaction>
</comment>
<comment type="cofactor">
    <cofactor evidence="1">
        <name>FAD</name>
        <dbReference type="ChEBI" id="CHEBI:57692"/>
    </cofactor>
</comment>
<comment type="pathway">
    <text evidence="1">Cell wall biogenesis; peptidoglycan biosynthesis.</text>
</comment>
<comment type="subcellular location">
    <subcellularLocation>
        <location evidence="1">Cytoplasm</location>
    </subcellularLocation>
</comment>
<comment type="similarity">
    <text evidence="1">Belongs to the MurB family.</text>
</comment>
<keyword id="KW-0131">Cell cycle</keyword>
<keyword id="KW-0132">Cell division</keyword>
<keyword id="KW-0133">Cell shape</keyword>
<keyword id="KW-0961">Cell wall biogenesis/degradation</keyword>
<keyword id="KW-0963">Cytoplasm</keyword>
<keyword id="KW-0274">FAD</keyword>
<keyword id="KW-0285">Flavoprotein</keyword>
<keyword id="KW-0521">NADP</keyword>
<keyword id="KW-0560">Oxidoreductase</keyword>
<keyword id="KW-0573">Peptidoglycan synthesis</keyword>
<protein>
    <recommendedName>
        <fullName evidence="1">UDP-N-acetylenolpyruvoylglucosamine reductase</fullName>
        <ecNumber evidence="1">1.3.1.98</ecNumber>
    </recommendedName>
    <alternativeName>
        <fullName evidence="1">UDP-N-acetylmuramate dehydrogenase</fullName>
    </alternativeName>
</protein>
<reference key="1">
    <citation type="journal article" date="2009" name="Proc. Natl. Acad. Sci. U.S.A.">
        <title>Characterizing a model human gut microbiota composed of members of its two dominant bacterial phyla.</title>
        <authorList>
            <person name="Mahowald M.A."/>
            <person name="Rey F.E."/>
            <person name="Seedorf H."/>
            <person name="Turnbaugh P.J."/>
            <person name="Fulton R.S."/>
            <person name="Wollam A."/>
            <person name="Shah N."/>
            <person name="Wang C."/>
            <person name="Magrini V."/>
            <person name="Wilson R.K."/>
            <person name="Cantarel B.L."/>
            <person name="Coutinho P.M."/>
            <person name="Henrissat B."/>
            <person name="Crock L.W."/>
            <person name="Russell A."/>
            <person name="Verberkmoes N.C."/>
            <person name="Hettich R.L."/>
            <person name="Gordon J.I."/>
        </authorList>
    </citation>
    <scope>NUCLEOTIDE SEQUENCE [LARGE SCALE GENOMIC DNA]</scope>
    <source>
        <strain>ATCC 33656 / DSM 3377 / JCM 17463 / KCTC 5835 / LMG 30912 / VPI 0990</strain>
    </source>
</reference>
<feature type="chain" id="PRO_1000202053" description="UDP-N-acetylenolpyruvoylglucosamine reductase">
    <location>
        <begin position="1"/>
        <end position="314"/>
    </location>
</feature>
<feature type="domain" description="FAD-binding PCMH-type" evidence="1">
    <location>
        <begin position="31"/>
        <end position="208"/>
    </location>
</feature>
<feature type="active site" evidence="1">
    <location>
        <position position="187"/>
    </location>
</feature>
<feature type="active site" description="Proton donor" evidence="1">
    <location>
        <position position="237"/>
    </location>
</feature>
<feature type="active site" evidence="1">
    <location>
        <position position="307"/>
    </location>
</feature>
<evidence type="ECO:0000255" key="1">
    <source>
        <dbReference type="HAMAP-Rule" id="MF_00037"/>
    </source>
</evidence>